<name>CSPLC_SOYBN</name>
<organism>
    <name type="scientific">Glycine max</name>
    <name type="common">Soybean</name>
    <name type="synonym">Glycine hispida</name>
    <dbReference type="NCBI Taxonomy" id="3847"/>
    <lineage>
        <taxon>Eukaryota</taxon>
        <taxon>Viridiplantae</taxon>
        <taxon>Streptophyta</taxon>
        <taxon>Embryophyta</taxon>
        <taxon>Tracheophyta</taxon>
        <taxon>Spermatophyta</taxon>
        <taxon>Magnoliopsida</taxon>
        <taxon>eudicotyledons</taxon>
        <taxon>Gunneridae</taxon>
        <taxon>Pentapetalae</taxon>
        <taxon>rosids</taxon>
        <taxon>fabids</taxon>
        <taxon>Fabales</taxon>
        <taxon>Fabaceae</taxon>
        <taxon>Papilionoideae</taxon>
        <taxon>50 kb inversion clade</taxon>
        <taxon>NPAAA clade</taxon>
        <taxon>indigoferoid/millettioid clade</taxon>
        <taxon>Phaseoleae</taxon>
        <taxon>Glycine</taxon>
        <taxon>Glycine subgen. Soja</taxon>
    </lineage>
</organism>
<protein>
    <recommendedName>
        <fullName>CASP-like protein 4D1</fullName>
        <shortName>GmCASPL4D1</shortName>
    </recommendedName>
</protein>
<reference key="1">
    <citation type="submission" date="2009-08" db="EMBL/GenBank/DDBJ databases">
        <authorList>
            <person name="Cheung F."/>
            <person name="Xiao Y."/>
            <person name="Chan A."/>
            <person name="Moskal W."/>
            <person name="Town C.D."/>
        </authorList>
    </citation>
    <scope>NUCLEOTIDE SEQUENCE [LARGE SCALE MRNA]</scope>
</reference>
<reference key="2">
    <citation type="journal article" date="2014" name="Plant Physiol.">
        <title>Functional and evolutionary analysis of the CASPARIAN STRIP MEMBRANE DOMAIN PROTEIN family.</title>
        <authorList>
            <person name="Roppolo D."/>
            <person name="Boeckmann B."/>
            <person name="Pfister A."/>
            <person name="Boutet E."/>
            <person name="Rubio M.C."/>
            <person name="Denervaud-Tendon V."/>
            <person name="Vermeer J.E."/>
            <person name="Gheyselinck J."/>
            <person name="Xenarios I."/>
            <person name="Geldner N."/>
        </authorList>
    </citation>
    <scope>GENE FAMILY</scope>
    <scope>NOMENCLATURE</scope>
</reference>
<keyword id="KW-1003">Cell membrane</keyword>
<keyword id="KW-0325">Glycoprotein</keyword>
<keyword id="KW-0472">Membrane</keyword>
<keyword id="KW-1185">Reference proteome</keyword>
<keyword id="KW-0812">Transmembrane</keyword>
<keyword id="KW-1133">Transmembrane helix</keyword>
<sequence>MPEMVDSNSTPSSSTGSRTVLLLLRVLTFVFLLIALILIAIVKQTDDETGVEIKFNDIYAYRYMISTIIIGFAYNLLQMALSIFTVVSGNRVLSGDGGYLFDFFGDKIISYLLISGSAAGFGVTVELGRGVPSNSFMDKANASASLLLIAFLFTAVASTFTSFALPKKD</sequence>
<dbReference type="EMBL" id="BT091452">
    <property type="protein sequence ID" value="ACU15618.1"/>
    <property type="molecule type" value="mRNA"/>
</dbReference>
<dbReference type="RefSeq" id="NP_001235496.1">
    <property type="nucleotide sequence ID" value="NM_001248567.1"/>
</dbReference>
<dbReference type="FunCoup" id="C6T1Z6">
    <property type="interactions" value="497"/>
</dbReference>
<dbReference type="PaxDb" id="3847-GLYMA02G10230.1"/>
<dbReference type="EnsemblPlants" id="KRH70475">
    <property type="protein sequence ID" value="KRH70475"/>
    <property type="gene ID" value="GLYMA_02G092500"/>
</dbReference>
<dbReference type="GeneID" id="100500517"/>
<dbReference type="Gramene" id="KRH70475">
    <property type="protein sequence ID" value="KRH70475"/>
    <property type="gene ID" value="GLYMA_02G092500"/>
</dbReference>
<dbReference type="KEGG" id="gmx:100500517"/>
<dbReference type="eggNOG" id="ENOG502S98H">
    <property type="taxonomic scope" value="Eukaryota"/>
</dbReference>
<dbReference type="HOGENOM" id="CLU_115129_0_0_1"/>
<dbReference type="InParanoid" id="C6T1Z6"/>
<dbReference type="OMA" id="DPPNITF"/>
<dbReference type="OrthoDB" id="685197at2759"/>
<dbReference type="Proteomes" id="UP000008827">
    <property type="component" value="Chromosome 2"/>
</dbReference>
<dbReference type="GO" id="GO:0005886">
    <property type="term" value="C:plasma membrane"/>
    <property type="evidence" value="ECO:0007669"/>
    <property type="project" value="UniProtKB-SubCell"/>
</dbReference>
<dbReference type="InterPro" id="IPR006459">
    <property type="entry name" value="CASP/CASPL"/>
</dbReference>
<dbReference type="InterPro" id="IPR006702">
    <property type="entry name" value="CASP_dom"/>
</dbReference>
<dbReference type="NCBIfam" id="TIGR01569">
    <property type="entry name" value="A_tha_TIGR01569"/>
    <property type="match status" value="1"/>
</dbReference>
<dbReference type="PANTHER" id="PTHR33573">
    <property type="entry name" value="CASP-LIKE PROTEIN 4A4"/>
    <property type="match status" value="1"/>
</dbReference>
<dbReference type="PANTHER" id="PTHR33573:SF40">
    <property type="entry name" value="CASP-LIKE PROTEIN 4D2"/>
    <property type="match status" value="1"/>
</dbReference>
<dbReference type="Pfam" id="PF04535">
    <property type="entry name" value="CASP_dom"/>
    <property type="match status" value="1"/>
</dbReference>
<proteinExistence type="evidence at transcript level"/>
<comment type="subunit">
    <text evidence="1">Homodimer and heterodimers.</text>
</comment>
<comment type="subcellular location">
    <subcellularLocation>
        <location evidence="1">Cell membrane</location>
        <topology evidence="1">Multi-pass membrane protein</topology>
    </subcellularLocation>
</comment>
<comment type="similarity">
    <text evidence="3">Belongs to the Casparian strip membrane proteins (CASP) family.</text>
</comment>
<evidence type="ECO:0000250" key="1"/>
<evidence type="ECO:0000255" key="2"/>
<evidence type="ECO:0000305" key="3"/>
<feature type="chain" id="PRO_0000391585" description="CASP-like protein 4D1">
    <location>
        <begin position="1"/>
        <end position="169"/>
    </location>
</feature>
<feature type="topological domain" description="Cytoplasmic" evidence="2">
    <location>
        <begin position="1"/>
        <end position="21"/>
    </location>
</feature>
<feature type="transmembrane region" description="Helical" evidence="2">
    <location>
        <begin position="22"/>
        <end position="42"/>
    </location>
</feature>
<feature type="topological domain" description="Extracellular" evidence="2">
    <location>
        <begin position="43"/>
        <end position="66"/>
    </location>
</feature>
<feature type="transmembrane region" description="Helical" evidence="2">
    <location>
        <begin position="67"/>
        <end position="87"/>
    </location>
</feature>
<feature type="topological domain" description="Cytoplasmic" evidence="2">
    <location>
        <begin position="88"/>
        <end position="107"/>
    </location>
</feature>
<feature type="transmembrane region" description="Helical" evidence="2">
    <location>
        <begin position="108"/>
        <end position="128"/>
    </location>
</feature>
<feature type="topological domain" description="Extracellular" evidence="2">
    <location>
        <begin position="129"/>
        <end position="145"/>
    </location>
</feature>
<feature type="transmembrane region" description="Helical" evidence="2">
    <location>
        <begin position="146"/>
        <end position="166"/>
    </location>
</feature>
<feature type="topological domain" description="Cytoplasmic" evidence="2">
    <location>
        <begin position="167"/>
        <end position="169"/>
    </location>
</feature>
<feature type="glycosylation site" description="N-linked (GlcNAc...) asparagine" evidence="2">
    <location>
        <position position="141"/>
    </location>
</feature>
<accession>C6T1Z6</accession>